<feature type="initiator methionine" description="Removed" evidence="4">
    <location>
        <position position="1"/>
    </location>
</feature>
<feature type="chain" id="PRO_0000185781" description="Glutathione S-transferase A2">
    <location>
        <begin position="2"/>
        <end position="223"/>
    </location>
</feature>
<feature type="domain" description="GST N-terminal">
    <location>
        <begin position="3"/>
        <end position="83"/>
    </location>
</feature>
<feature type="domain" description="GST C-terminal">
    <location>
        <begin position="85"/>
        <end position="208"/>
    </location>
</feature>
<feature type="binding site" evidence="3">
    <location>
        <position position="9"/>
    </location>
    <ligand>
        <name>glutathione</name>
        <dbReference type="ChEBI" id="CHEBI:57925"/>
    </ligand>
</feature>
<feature type="binding site" evidence="2">
    <location>
        <position position="45"/>
    </location>
    <ligand>
        <name>glutathione</name>
        <dbReference type="ChEBI" id="CHEBI:57925"/>
    </ligand>
</feature>
<feature type="binding site" evidence="5">
    <location>
        <begin position="54"/>
        <end position="55"/>
    </location>
    <ligand>
        <name>glutathione</name>
        <dbReference type="ChEBI" id="CHEBI:57925"/>
    </ligand>
</feature>
<feature type="binding site" evidence="3">
    <location>
        <begin position="67"/>
        <end position="68"/>
    </location>
    <ligand>
        <name>glutathione</name>
        <dbReference type="ChEBI" id="CHEBI:57925"/>
    </ligand>
</feature>
<feature type="modified residue" description="N-acetylalanine" evidence="4">
    <location>
        <position position="2"/>
    </location>
</feature>
<feature type="modified residue" description="N6-succinyllysine" evidence="4">
    <location>
        <position position="4"/>
    </location>
</feature>
<dbReference type="EC" id="2.5.1.18"/>
<dbReference type="EMBL" id="AF027386">
    <property type="protein sequence ID" value="AAB83995.1"/>
    <property type="status" value="ALT_FRAME"/>
    <property type="molecule type" value="mRNA"/>
</dbReference>
<dbReference type="EMBL" id="BC114835">
    <property type="protein sequence ID" value="AAI14836.1"/>
    <property type="molecule type" value="mRNA"/>
</dbReference>
<dbReference type="RefSeq" id="NP_803481.2">
    <property type="nucleotide sequence ID" value="NM_177515.3"/>
</dbReference>
<dbReference type="SMR" id="O18879"/>
<dbReference type="FunCoup" id="O18879">
    <property type="interactions" value="116"/>
</dbReference>
<dbReference type="STRING" id="9913.ENSBTAP00000043661"/>
<dbReference type="PaxDb" id="9913-ENSBTAP00000043661"/>
<dbReference type="PeptideAtlas" id="O18879"/>
<dbReference type="Ensembl" id="ENSBTAT00000046354.4">
    <property type="protein sequence ID" value="ENSBTAP00000043661.2"/>
    <property type="gene ID" value="ENSBTAG00000006546.6"/>
</dbReference>
<dbReference type="GeneID" id="281805"/>
<dbReference type="KEGG" id="bta:281805"/>
<dbReference type="CTD" id="2939"/>
<dbReference type="VEuPathDB" id="HostDB:ENSBTAG00000006546"/>
<dbReference type="eggNOG" id="KOG1695">
    <property type="taxonomic scope" value="Eukaryota"/>
</dbReference>
<dbReference type="GeneTree" id="ENSGT00940000154526"/>
<dbReference type="HOGENOM" id="CLU_039475_4_0_1"/>
<dbReference type="InParanoid" id="O18879"/>
<dbReference type="OMA" id="AYLNIDY"/>
<dbReference type="OrthoDB" id="414243at2759"/>
<dbReference type="TreeFam" id="TF105321"/>
<dbReference type="Reactome" id="R-BTA-156590">
    <property type="pathway name" value="Glutathione conjugation"/>
</dbReference>
<dbReference type="Reactome" id="R-BTA-189483">
    <property type="pathway name" value="Heme degradation"/>
</dbReference>
<dbReference type="Reactome" id="R-BTA-9748787">
    <property type="pathway name" value="Azathioprine ADME"/>
</dbReference>
<dbReference type="Proteomes" id="UP000009136">
    <property type="component" value="Chromosome 23"/>
</dbReference>
<dbReference type="Bgee" id="ENSBTAG00000006546">
    <property type="expression patterns" value="Expressed in lung and 93 other cell types or tissues"/>
</dbReference>
<dbReference type="GO" id="GO:0005829">
    <property type="term" value="C:cytosol"/>
    <property type="evidence" value="ECO:0000318"/>
    <property type="project" value="GO_Central"/>
</dbReference>
<dbReference type="GO" id="GO:0004364">
    <property type="term" value="F:glutathione transferase activity"/>
    <property type="evidence" value="ECO:0000250"/>
    <property type="project" value="UniProtKB"/>
</dbReference>
<dbReference type="GO" id="GO:0006749">
    <property type="term" value="P:glutathione metabolic process"/>
    <property type="evidence" value="ECO:0000250"/>
    <property type="project" value="UniProtKB"/>
</dbReference>
<dbReference type="GO" id="GO:0006805">
    <property type="term" value="P:xenobiotic metabolic process"/>
    <property type="evidence" value="ECO:0000318"/>
    <property type="project" value="GO_Central"/>
</dbReference>
<dbReference type="CDD" id="cd03208">
    <property type="entry name" value="GST_C_Alpha"/>
    <property type="match status" value="1"/>
</dbReference>
<dbReference type="CDD" id="cd03077">
    <property type="entry name" value="GST_N_Alpha"/>
    <property type="match status" value="1"/>
</dbReference>
<dbReference type="FunFam" id="1.20.1050.10:FF:000005">
    <property type="entry name" value="Glutathione S-transferase A1"/>
    <property type="match status" value="1"/>
</dbReference>
<dbReference type="Gene3D" id="1.20.1050.10">
    <property type="match status" value="1"/>
</dbReference>
<dbReference type="Gene3D" id="3.40.30.10">
    <property type="entry name" value="Glutaredoxin"/>
    <property type="match status" value="1"/>
</dbReference>
<dbReference type="InterPro" id="IPR010987">
    <property type="entry name" value="Glutathione-S-Trfase_C-like"/>
</dbReference>
<dbReference type="InterPro" id="IPR036282">
    <property type="entry name" value="Glutathione-S-Trfase_C_sf"/>
</dbReference>
<dbReference type="InterPro" id="IPR040079">
    <property type="entry name" value="Glutathione_S-Trfase"/>
</dbReference>
<dbReference type="InterPro" id="IPR004045">
    <property type="entry name" value="Glutathione_S-Trfase_N"/>
</dbReference>
<dbReference type="InterPro" id="IPR003080">
    <property type="entry name" value="GST_alpha"/>
</dbReference>
<dbReference type="InterPro" id="IPR004046">
    <property type="entry name" value="GST_C"/>
</dbReference>
<dbReference type="InterPro" id="IPR050213">
    <property type="entry name" value="GST_superfamily"/>
</dbReference>
<dbReference type="InterPro" id="IPR036249">
    <property type="entry name" value="Thioredoxin-like_sf"/>
</dbReference>
<dbReference type="PANTHER" id="PTHR11571">
    <property type="entry name" value="GLUTATHIONE S-TRANSFERASE"/>
    <property type="match status" value="1"/>
</dbReference>
<dbReference type="PANTHER" id="PTHR11571:SF107">
    <property type="entry name" value="GLUTATHIONE S-TRANSFERASE A1"/>
    <property type="match status" value="1"/>
</dbReference>
<dbReference type="Pfam" id="PF00043">
    <property type="entry name" value="GST_C"/>
    <property type="match status" value="1"/>
</dbReference>
<dbReference type="Pfam" id="PF02798">
    <property type="entry name" value="GST_N"/>
    <property type="match status" value="1"/>
</dbReference>
<dbReference type="PRINTS" id="PR01266">
    <property type="entry name" value="GSTRNSFRASEA"/>
</dbReference>
<dbReference type="SFLD" id="SFLDG01205">
    <property type="entry name" value="AMPS.1"/>
    <property type="match status" value="1"/>
</dbReference>
<dbReference type="SFLD" id="SFLDS00019">
    <property type="entry name" value="Glutathione_Transferase_(cytos"/>
    <property type="match status" value="1"/>
</dbReference>
<dbReference type="SUPFAM" id="SSF47616">
    <property type="entry name" value="GST C-terminal domain-like"/>
    <property type="match status" value="1"/>
</dbReference>
<dbReference type="SUPFAM" id="SSF52833">
    <property type="entry name" value="Thioredoxin-like"/>
    <property type="match status" value="1"/>
</dbReference>
<dbReference type="PROSITE" id="PS50405">
    <property type="entry name" value="GST_CTER"/>
    <property type="match status" value="1"/>
</dbReference>
<dbReference type="PROSITE" id="PS50404">
    <property type="entry name" value="GST_NTER"/>
    <property type="match status" value="1"/>
</dbReference>
<organism>
    <name type="scientific">Bos taurus</name>
    <name type="common">Bovine</name>
    <dbReference type="NCBI Taxonomy" id="9913"/>
    <lineage>
        <taxon>Eukaryota</taxon>
        <taxon>Metazoa</taxon>
        <taxon>Chordata</taxon>
        <taxon>Craniata</taxon>
        <taxon>Vertebrata</taxon>
        <taxon>Euteleostomi</taxon>
        <taxon>Mammalia</taxon>
        <taxon>Eutheria</taxon>
        <taxon>Laurasiatheria</taxon>
        <taxon>Artiodactyla</taxon>
        <taxon>Ruminantia</taxon>
        <taxon>Pecora</taxon>
        <taxon>Bovidae</taxon>
        <taxon>Bovinae</taxon>
        <taxon>Bos</taxon>
    </lineage>
</organism>
<name>GSTA2_BOVIN</name>
<keyword id="KW-0007">Acetylation</keyword>
<keyword id="KW-0963">Cytoplasm</keyword>
<keyword id="KW-1185">Reference proteome</keyword>
<keyword id="KW-0808">Transferase</keyword>
<evidence type="ECO:0000250" key="1"/>
<evidence type="ECO:0000250" key="2">
    <source>
        <dbReference type="UniProtKB" id="P08263"/>
    </source>
</evidence>
<evidence type="ECO:0000250" key="3">
    <source>
        <dbReference type="UniProtKB" id="P13745"/>
    </source>
</evidence>
<evidence type="ECO:0000250" key="4">
    <source>
        <dbReference type="UniProtKB" id="P30115"/>
    </source>
</evidence>
<evidence type="ECO:0000250" key="5">
    <source>
        <dbReference type="UniProtKB" id="P30711"/>
    </source>
</evidence>
<evidence type="ECO:0000305" key="6"/>
<reference key="1">
    <citation type="journal article" date="1999" name="Endocrinology">
        <title>High expression of bovine alpha glutathione S-transferase (GSTA1, GSTA2) subunits is mainly associated with steroidogenically active cells and regulated by gonadotropins in bovine ovarian follicles.</title>
        <authorList>
            <person name="Rabahi F."/>
            <person name="Brule S."/>
            <person name="Sirois J."/>
            <person name="Beckers J.-F.M.P."/>
            <person name="Silversides D.W."/>
            <person name="Lussier J.G."/>
        </authorList>
    </citation>
    <scope>NUCLEOTIDE SEQUENCE [MRNA]</scope>
    <source>
        <strain>Holstein</strain>
        <tissue>Corpus luteum</tissue>
    </source>
</reference>
<reference key="2">
    <citation type="submission" date="2006-04" db="EMBL/GenBank/DDBJ databases">
        <authorList>
            <consortium name="NIH - Mammalian Gene Collection (MGC) project"/>
        </authorList>
    </citation>
    <scope>NUCLEOTIDE SEQUENCE [LARGE SCALE MRNA]</scope>
    <source>
        <strain>Hereford</strain>
        <tissue>Thymus</tissue>
    </source>
</reference>
<protein>
    <recommendedName>
        <fullName>Glutathione S-transferase A2</fullName>
        <ecNumber>2.5.1.18</ecNumber>
    </recommendedName>
    <alternativeName>
        <fullName>GST class-alpha member 2</fullName>
    </alternativeName>
    <alternativeName>
        <fullName>Glutathione S-transferase alpha-2</fullName>
    </alternativeName>
</protein>
<proteinExistence type="evidence at transcript level"/>
<sequence length="223" mass="25717">MAGKPKLHYFNGRGRMECIRWLLAAAGVEFEEKFIEQPEDLDKLRNDGSLMFQQVPMVEIDGMKLVQTRAILNYIATKYNLYGKDMKERALIDMYSEGVEDLGEMIMHLPLCPPDQKDAKIAQIKERTTNRYFPAFEKVLKNHGQDYLVGNKLSKADIHLVELLYYVEELDPSLLANFPLLKGLKARVSSLPAVKKFLQPGSQRKPPMDEKNLEEAKRIFRIK</sequence>
<comment type="function">
    <text>Conjugation of reduced glutathione to a wide number of exogenous and endogenous hydrophobic electrophiles.</text>
</comment>
<comment type="catalytic activity">
    <reaction>
        <text>RX + glutathione = an S-substituted glutathione + a halide anion + H(+)</text>
        <dbReference type="Rhea" id="RHEA:16437"/>
        <dbReference type="ChEBI" id="CHEBI:15378"/>
        <dbReference type="ChEBI" id="CHEBI:16042"/>
        <dbReference type="ChEBI" id="CHEBI:17792"/>
        <dbReference type="ChEBI" id="CHEBI:57925"/>
        <dbReference type="ChEBI" id="CHEBI:90779"/>
        <dbReference type="EC" id="2.5.1.18"/>
    </reaction>
</comment>
<comment type="subunit">
    <text evidence="1">Homodimer.</text>
</comment>
<comment type="subcellular location">
    <subcellularLocation>
        <location evidence="1">Cytoplasm</location>
    </subcellularLocation>
</comment>
<comment type="tissue specificity">
    <text>Expressed in corpus luteum, adrenal gland, testis, liver, lung, thyroid and kidney.</text>
</comment>
<comment type="similarity">
    <text evidence="6">Belongs to the GST superfamily. Alpha family.</text>
</comment>
<comment type="sequence caution" evidence="6">
    <conflict type="frameshift">
        <sequence resource="EMBL-CDS" id="AAB83995"/>
    </conflict>
</comment>
<accession>O18879</accession>
<accession>Q1RML3</accession>
<gene>
    <name type="primary">GSTA2</name>
</gene>